<accession>P07145</accession>
<evidence type="ECO:0000250" key="1">
    <source>
        <dbReference type="UniProtKB" id="P04040"/>
    </source>
</evidence>
<evidence type="ECO:0000250" key="2">
    <source>
        <dbReference type="UniProtKB" id="P25819"/>
    </source>
</evidence>
<evidence type="ECO:0000255" key="3">
    <source>
        <dbReference type="PROSITE-ProRule" id="PRU10013"/>
    </source>
</evidence>
<evidence type="ECO:0000305" key="4"/>
<dbReference type="EC" id="1.11.1.6" evidence="3"/>
<dbReference type="EMBL" id="X05549">
    <property type="protein sequence ID" value="CAA29063.1"/>
    <property type="molecule type" value="mRNA"/>
</dbReference>
<dbReference type="PIR" id="S07124">
    <property type="entry name" value="S07124"/>
</dbReference>
<dbReference type="SMR" id="P07145"/>
<dbReference type="GO" id="GO:0005829">
    <property type="term" value="C:cytosol"/>
    <property type="evidence" value="ECO:0007669"/>
    <property type="project" value="UniProtKB-SubCell"/>
</dbReference>
<dbReference type="GO" id="GO:0005782">
    <property type="term" value="C:peroxisomal matrix"/>
    <property type="evidence" value="ECO:0007669"/>
    <property type="project" value="UniProtKB-SubCell"/>
</dbReference>
<dbReference type="GO" id="GO:0005886">
    <property type="term" value="C:plasma membrane"/>
    <property type="evidence" value="ECO:0007669"/>
    <property type="project" value="TreeGrafter"/>
</dbReference>
<dbReference type="GO" id="GO:0004096">
    <property type="term" value="F:catalase activity"/>
    <property type="evidence" value="ECO:0007669"/>
    <property type="project" value="UniProtKB-EC"/>
</dbReference>
<dbReference type="GO" id="GO:0020037">
    <property type="term" value="F:heme binding"/>
    <property type="evidence" value="ECO:0007669"/>
    <property type="project" value="InterPro"/>
</dbReference>
<dbReference type="GO" id="GO:0046872">
    <property type="term" value="F:metal ion binding"/>
    <property type="evidence" value="ECO:0007669"/>
    <property type="project" value="UniProtKB-KW"/>
</dbReference>
<dbReference type="GO" id="GO:0042744">
    <property type="term" value="P:hydrogen peroxide catabolic process"/>
    <property type="evidence" value="ECO:0007669"/>
    <property type="project" value="UniProtKB-KW"/>
</dbReference>
<dbReference type="GO" id="GO:0042542">
    <property type="term" value="P:response to hydrogen peroxide"/>
    <property type="evidence" value="ECO:0007669"/>
    <property type="project" value="TreeGrafter"/>
</dbReference>
<dbReference type="CDD" id="cd08154">
    <property type="entry name" value="catalase_clade_1"/>
    <property type="match status" value="1"/>
</dbReference>
<dbReference type="FunFam" id="2.40.180.10:FF:000002">
    <property type="entry name" value="Catalase"/>
    <property type="match status" value="1"/>
</dbReference>
<dbReference type="Gene3D" id="2.40.180.10">
    <property type="entry name" value="Catalase core domain"/>
    <property type="match status" value="1"/>
</dbReference>
<dbReference type="InterPro" id="IPR018028">
    <property type="entry name" value="Catalase"/>
</dbReference>
<dbReference type="InterPro" id="IPR024708">
    <property type="entry name" value="Catalase_AS"/>
</dbReference>
<dbReference type="InterPro" id="IPR024711">
    <property type="entry name" value="Catalase_clade1/3"/>
</dbReference>
<dbReference type="InterPro" id="IPR011614">
    <property type="entry name" value="Catalase_core"/>
</dbReference>
<dbReference type="InterPro" id="IPR002226">
    <property type="entry name" value="Catalase_haem_BS"/>
</dbReference>
<dbReference type="InterPro" id="IPR010582">
    <property type="entry name" value="Catalase_immune_responsive"/>
</dbReference>
<dbReference type="InterPro" id="IPR020835">
    <property type="entry name" value="Catalase_sf"/>
</dbReference>
<dbReference type="PANTHER" id="PTHR11465">
    <property type="entry name" value="CATALASE"/>
    <property type="match status" value="1"/>
</dbReference>
<dbReference type="PANTHER" id="PTHR11465:SF45">
    <property type="entry name" value="CATALASE ISOZYME A"/>
    <property type="match status" value="1"/>
</dbReference>
<dbReference type="Pfam" id="PF00199">
    <property type="entry name" value="Catalase"/>
    <property type="match status" value="1"/>
</dbReference>
<dbReference type="Pfam" id="PF06628">
    <property type="entry name" value="Catalase-rel"/>
    <property type="match status" value="1"/>
</dbReference>
<dbReference type="PIRSF" id="PIRSF038928">
    <property type="entry name" value="Catalase_clade1-3"/>
    <property type="match status" value="1"/>
</dbReference>
<dbReference type="PRINTS" id="PR00067">
    <property type="entry name" value="CATALASE"/>
</dbReference>
<dbReference type="SMART" id="SM01060">
    <property type="entry name" value="Catalase"/>
    <property type="match status" value="1"/>
</dbReference>
<dbReference type="SUPFAM" id="SSF56634">
    <property type="entry name" value="Heme-dependent catalase-like"/>
    <property type="match status" value="1"/>
</dbReference>
<dbReference type="PROSITE" id="PS00437">
    <property type="entry name" value="CATALASE_1"/>
    <property type="match status" value="1"/>
</dbReference>
<dbReference type="PROSITE" id="PS00438">
    <property type="entry name" value="CATALASE_2"/>
    <property type="match status" value="1"/>
</dbReference>
<dbReference type="PROSITE" id="PS51402">
    <property type="entry name" value="CATALASE_3"/>
    <property type="match status" value="1"/>
</dbReference>
<reference key="1">
    <citation type="journal article" date="1987" name="Eur. J. Biochem.">
        <title>Molecular cloning and nucleotide sequence of full-length cDNA for sweet potato catalase mRNA.</title>
        <authorList>
            <person name="Sakajo S."/>
            <person name="Nakamura K."/>
            <person name="Asahi T."/>
        </authorList>
    </citation>
    <scope>NUCLEOTIDE SEQUENCE [MRNA]</scope>
    <source>
        <strain>cv. Kokei No. 14</strain>
    </source>
</reference>
<sequence length="492" mass="56985">MDPSKYRPSSSFNTPFCTTNSGAPVWNNTCALTVGSRGPILLEDYHLVEKIQNFTRERIPERVVHARGASAKGFFEVTHDITHLTCADFLRAPGVQTPLIVRFSTVIHERGSPETIRDPRGFAVKMYTRGGNWDLVGNNFPVFFIRDGTQFPDVIHAFKPNPKSHIQENWRILDYLSHLPESLNTFAWFYDDVGIPTDYRHMEGFGVHTFTMINKEGKANYVKFHWKPTCGVKCLLEEEAIRIGGENHSHATQDLYESIAAGNYPEWKLYIQVMDPDHEDRFDFDPLDTTKIWPEELIPLQPVGRMVLNKNIDNFFAENEMLAMDPAHIVPGIYFSDDKMLQARVFAYADTHRHRLGPNYMLLPVNAPKCAHHNNSYDGYMNFVHRDEEVDYFPSKFDNTRNAERFPTPLRIVTGQRDKCVIEKENNFKQPGDRYRSWAPDRQDRFINRWVKALSEPRVTHEIRSTWISYLTQADRSLGQKVASRLNIRPTM</sequence>
<feature type="chain" id="PRO_0000084943" description="Catalase">
    <location>
        <begin position="1"/>
        <end position="492"/>
    </location>
</feature>
<feature type="active site" evidence="3">
    <location>
        <position position="65"/>
    </location>
</feature>
<feature type="active site" evidence="3">
    <location>
        <position position="138"/>
    </location>
</feature>
<feature type="binding site" description="axial binding residue" evidence="1">
    <location>
        <position position="348"/>
    </location>
    <ligand>
        <name>heme</name>
        <dbReference type="ChEBI" id="CHEBI:30413"/>
    </ligand>
    <ligandPart>
        <name>Fe</name>
        <dbReference type="ChEBI" id="CHEBI:18248"/>
    </ligandPart>
</feature>
<proteinExistence type="evidence at transcript level"/>
<keyword id="KW-0963">Cytoplasm</keyword>
<keyword id="KW-0349">Heme</keyword>
<keyword id="KW-0376">Hydrogen peroxide</keyword>
<keyword id="KW-0408">Iron</keyword>
<keyword id="KW-0479">Metal-binding</keyword>
<keyword id="KW-0560">Oxidoreductase</keyword>
<keyword id="KW-0575">Peroxidase</keyword>
<keyword id="KW-0576">Peroxisome</keyword>
<comment type="function">
    <text evidence="1">Catalyzes the degradation of hydrogen peroxide (H(2)O(2)) generated by peroxisomal oxidases to water and oxygen, thereby protecting cells from the toxic effects of hydrogen peroxide.</text>
</comment>
<comment type="catalytic activity">
    <reaction evidence="3">
        <text>2 H2O2 = O2 + 2 H2O</text>
        <dbReference type="Rhea" id="RHEA:20309"/>
        <dbReference type="ChEBI" id="CHEBI:15377"/>
        <dbReference type="ChEBI" id="CHEBI:15379"/>
        <dbReference type="ChEBI" id="CHEBI:16240"/>
        <dbReference type="EC" id="1.11.1.6"/>
    </reaction>
</comment>
<comment type="cofactor">
    <cofactor evidence="1">
        <name>heme</name>
        <dbReference type="ChEBI" id="CHEBI:30413"/>
    </cofactor>
</comment>
<comment type="subunit">
    <text>Homotetramer.</text>
</comment>
<comment type="subcellular location">
    <subcellularLocation>
        <location evidence="2">Cytoplasm</location>
        <location evidence="2">Cytosol</location>
    </subcellularLocation>
    <subcellularLocation>
        <location evidence="2">Peroxisome matrix</location>
    </subcellularLocation>
</comment>
<comment type="similarity">
    <text evidence="4">Belongs to the catalase family.</text>
</comment>
<protein>
    <recommendedName>
        <fullName>Catalase</fullName>
        <ecNumber evidence="3">1.11.1.6</ecNumber>
    </recommendedName>
</protein>
<name>CATA_IPOBA</name>
<organism>
    <name type="scientific">Ipomoea batatas</name>
    <name type="common">Sweet potato</name>
    <name type="synonym">Convolvulus batatas</name>
    <dbReference type="NCBI Taxonomy" id="4120"/>
    <lineage>
        <taxon>Eukaryota</taxon>
        <taxon>Viridiplantae</taxon>
        <taxon>Streptophyta</taxon>
        <taxon>Embryophyta</taxon>
        <taxon>Tracheophyta</taxon>
        <taxon>Spermatophyta</taxon>
        <taxon>Magnoliopsida</taxon>
        <taxon>eudicotyledons</taxon>
        <taxon>Gunneridae</taxon>
        <taxon>Pentapetalae</taxon>
        <taxon>asterids</taxon>
        <taxon>lamiids</taxon>
        <taxon>Solanales</taxon>
        <taxon>Convolvulaceae</taxon>
        <taxon>Ipomoeeae</taxon>
        <taxon>Ipomoea</taxon>
    </lineage>
</organism>